<accession>Q9HM46</accession>
<evidence type="ECO:0000250" key="1">
    <source>
        <dbReference type="UniProtKB" id="E1QU22"/>
    </source>
</evidence>
<evidence type="ECO:0000255" key="2">
    <source>
        <dbReference type="HAMAP-Rule" id="MF_01116"/>
    </source>
</evidence>
<evidence type="ECO:0000305" key="3"/>
<protein>
    <recommendedName>
        <fullName evidence="2 3">16S rRNA aminocarboxypropyltransferase</fullName>
        <ecNumber evidence="2">2.5.1.157</ecNumber>
    </recommendedName>
</protein>
<gene>
    <name type="ordered locus">Ta0023</name>
</gene>
<proteinExistence type="inferred from homology"/>
<organism>
    <name type="scientific">Thermoplasma acidophilum (strain ATCC 25905 / DSM 1728 / JCM 9062 / NBRC 15155 / AMRC-C165)</name>
    <dbReference type="NCBI Taxonomy" id="273075"/>
    <lineage>
        <taxon>Archaea</taxon>
        <taxon>Methanobacteriati</taxon>
        <taxon>Thermoplasmatota</taxon>
        <taxon>Thermoplasmata</taxon>
        <taxon>Thermoplasmatales</taxon>
        <taxon>Thermoplasmataceae</taxon>
        <taxon>Thermoplasma</taxon>
    </lineage>
</organism>
<feature type="chain" id="PRO_0000094424" description="16S rRNA aminocarboxypropyltransferase">
    <location>
        <begin position="1"/>
        <end position="163"/>
    </location>
</feature>
<feature type="binding site" evidence="1 2">
    <location>
        <position position="18"/>
    </location>
    <ligand>
        <name>S-adenosyl-L-methionine</name>
        <dbReference type="ChEBI" id="CHEBI:59789"/>
    </ligand>
</feature>
<feature type="binding site" evidence="1 2">
    <location>
        <position position="66"/>
    </location>
    <ligand>
        <name>S-adenosyl-L-methionine</name>
        <dbReference type="ChEBI" id="CHEBI:59789"/>
    </ligand>
</feature>
<feature type="binding site" evidence="1 2">
    <location>
        <position position="87"/>
    </location>
    <ligand>
        <name>S-adenosyl-L-methionine</name>
        <dbReference type="ChEBI" id="CHEBI:59789"/>
    </ligand>
</feature>
<feature type="binding site" evidence="2">
    <location>
        <position position="106"/>
    </location>
    <ligand>
        <name>S-adenosyl-L-methionine</name>
        <dbReference type="ChEBI" id="CHEBI:59789"/>
    </ligand>
</feature>
<sequence length="163" mass="18697">MIYIYFIYLKQDDPKKSTMRKLERFGIARRISPGGARDKLMLTRSADTVLSKNDRFIAERSGICVIEGSWNREDTFAGLRFPYGRRLPKLLAANPVNYGKLEKLSSIEAVAAALYIMGFQDDASAILSKYTWGQNFLQLNKNPLDEYREADPEKIPEIENAYF</sequence>
<name>TSR3_THEAC</name>
<comment type="function">
    <text evidence="2">Aminocarboxypropyltransferase that catalyzes the aminocarboxypropyl transfer on pseudouridine corresponding to position 914 in M.jannaschii 16S rRNA. It constitutes the last step in biosynthesis of the hypermodified N1-methyl-N3-(3-amino-3-carboxypropyl) pseudouridine (m1acp3-Psi).</text>
</comment>
<comment type="catalytic activity">
    <reaction evidence="2">
        <text>an N(1)-methylpseudouridine in rRNA + S-adenosyl-L-methionine = N(1)-methyl-N(3)-[(3S)-3-amino-3-carboxypropyl]pseudouridine in rRNA + S-methyl-5'-thioadenosine + H(+)</text>
        <dbReference type="Rhea" id="RHEA:63296"/>
        <dbReference type="Rhea" id="RHEA-COMP:11634"/>
        <dbReference type="Rhea" id="RHEA-COMP:16310"/>
        <dbReference type="ChEBI" id="CHEBI:15378"/>
        <dbReference type="ChEBI" id="CHEBI:17509"/>
        <dbReference type="ChEBI" id="CHEBI:59789"/>
        <dbReference type="ChEBI" id="CHEBI:74890"/>
        <dbReference type="ChEBI" id="CHEBI:146234"/>
        <dbReference type="EC" id="2.5.1.157"/>
    </reaction>
</comment>
<comment type="subcellular location">
    <subcellularLocation>
        <location evidence="2">Cytoplasm</location>
    </subcellularLocation>
</comment>
<comment type="similarity">
    <text evidence="2">Belongs to the TDD superfamily. TSR3 family.</text>
</comment>
<comment type="sequence caution" evidence="3">
    <conflict type="erroneous initiation">
        <sequence resource="EMBL-CDS" id="CAC11172"/>
    </conflict>
</comment>
<reference key="1">
    <citation type="journal article" date="2000" name="Nature">
        <title>The genome sequence of the thermoacidophilic scavenger Thermoplasma acidophilum.</title>
        <authorList>
            <person name="Ruepp A."/>
            <person name="Graml W."/>
            <person name="Santos-Martinez M.-L."/>
            <person name="Koretke K.K."/>
            <person name="Volker C."/>
            <person name="Mewes H.-W."/>
            <person name="Frishman D."/>
            <person name="Stocker S."/>
            <person name="Lupas A.N."/>
            <person name="Baumeister W."/>
        </authorList>
    </citation>
    <scope>NUCLEOTIDE SEQUENCE [LARGE SCALE GENOMIC DNA]</scope>
    <source>
        <strain>ATCC 25905 / DSM 1728 / JCM 9062 / NBRC 15155 / AMRC-C165</strain>
    </source>
</reference>
<keyword id="KW-0963">Cytoplasm</keyword>
<keyword id="KW-1185">Reference proteome</keyword>
<keyword id="KW-0690">Ribosome biogenesis</keyword>
<keyword id="KW-0698">rRNA processing</keyword>
<keyword id="KW-0949">S-adenosyl-L-methionine</keyword>
<keyword id="KW-0808">Transferase</keyword>
<dbReference type="EC" id="2.5.1.157" evidence="2"/>
<dbReference type="EMBL" id="AL445063">
    <property type="protein sequence ID" value="CAC11172.1"/>
    <property type="status" value="ALT_INIT"/>
    <property type="molecule type" value="Genomic_DNA"/>
</dbReference>
<dbReference type="RefSeq" id="WP_010900451.1">
    <property type="nucleotide sequence ID" value="NC_002578.1"/>
</dbReference>
<dbReference type="SMR" id="Q9HM46"/>
<dbReference type="FunCoup" id="Q9HM46">
    <property type="interactions" value="95"/>
</dbReference>
<dbReference type="STRING" id="273075.gene:9571239"/>
<dbReference type="PaxDb" id="273075-Ta0023m"/>
<dbReference type="EnsemblBacteria" id="CAC11172">
    <property type="protein sequence ID" value="CAC11172"/>
    <property type="gene ID" value="CAC11172"/>
</dbReference>
<dbReference type="KEGG" id="tac:Ta0023"/>
<dbReference type="eggNOG" id="arCOG04733">
    <property type="taxonomic scope" value="Archaea"/>
</dbReference>
<dbReference type="HOGENOM" id="CLU_035060_4_1_2"/>
<dbReference type="InParanoid" id="Q9HM46"/>
<dbReference type="OrthoDB" id="7441at2157"/>
<dbReference type="Proteomes" id="UP000001024">
    <property type="component" value="Chromosome"/>
</dbReference>
<dbReference type="GO" id="GO:0005737">
    <property type="term" value="C:cytoplasm"/>
    <property type="evidence" value="ECO:0007669"/>
    <property type="project" value="UniProtKB-SubCell"/>
</dbReference>
<dbReference type="GO" id="GO:0106388">
    <property type="term" value="F:18S rRNA aminocarboxypropyltransferase activity"/>
    <property type="evidence" value="ECO:0007669"/>
    <property type="project" value="InterPro"/>
</dbReference>
<dbReference type="GO" id="GO:1904047">
    <property type="term" value="F:S-adenosyl-L-methionine binding"/>
    <property type="evidence" value="ECO:0007669"/>
    <property type="project" value="UniProtKB-UniRule"/>
</dbReference>
<dbReference type="GO" id="GO:0000455">
    <property type="term" value="P:enzyme-directed rRNA pseudouridine synthesis"/>
    <property type="evidence" value="ECO:0007669"/>
    <property type="project" value="UniProtKB-UniRule"/>
</dbReference>
<dbReference type="HAMAP" id="MF_01116">
    <property type="entry name" value="TSR3"/>
    <property type="match status" value="1"/>
</dbReference>
<dbReference type="InterPro" id="IPR022968">
    <property type="entry name" value="Tsr3-like"/>
</dbReference>
<dbReference type="InterPro" id="IPR007177">
    <property type="entry name" value="Tsr3_C"/>
</dbReference>
<dbReference type="NCBIfam" id="NF002621">
    <property type="entry name" value="PRK02287.1"/>
    <property type="match status" value="1"/>
</dbReference>
<dbReference type="PANTHER" id="PTHR20426:SF0">
    <property type="entry name" value="18S RRNA AMINOCARBOXYPROPYLTRANSFERASE"/>
    <property type="match status" value="1"/>
</dbReference>
<dbReference type="PANTHER" id="PTHR20426">
    <property type="entry name" value="RIBOSOME BIOGENESIS PROTEIN TSR3 HOMOLOG"/>
    <property type="match status" value="1"/>
</dbReference>
<dbReference type="Pfam" id="PF04034">
    <property type="entry name" value="Ribo_biogen_C"/>
    <property type="match status" value="1"/>
</dbReference>